<feature type="chain" id="PRO_1000064235" description="Glycerol-3-phosphate acyltransferase">
    <location>
        <begin position="1"/>
        <end position="199"/>
    </location>
</feature>
<feature type="transmembrane region" description="Helical" evidence="1">
    <location>
        <begin position="3"/>
        <end position="23"/>
    </location>
</feature>
<feature type="transmembrane region" description="Helical" evidence="1">
    <location>
        <begin position="50"/>
        <end position="70"/>
    </location>
</feature>
<feature type="transmembrane region" description="Helical" evidence="1">
    <location>
        <begin position="77"/>
        <end position="97"/>
    </location>
</feature>
<feature type="transmembrane region" description="Helical" evidence="1">
    <location>
        <begin position="110"/>
        <end position="130"/>
    </location>
</feature>
<feature type="transmembrane region" description="Helical" evidence="1">
    <location>
        <begin position="136"/>
        <end position="156"/>
    </location>
</feature>
<reference key="1">
    <citation type="submission" date="2007-08" db="EMBL/GenBank/DDBJ databases">
        <title>Complete sequence of Thermotoga lettingae TMO.</title>
        <authorList>
            <consortium name="US DOE Joint Genome Institute"/>
            <person name="Copeland A."/>
            <person name="Lucas S."/>
            <person name="Lapidus A."/>
            <person name="Barry K."/>
            <person name="Glavina del Rio T."/>
            <person name="Dalin E."/>
            <person name="Tice H."/>
            <person name="Pitluck S."/>
            <person name="Foster B."/>
            <person name="Bruce D."/>
            <person name="Schmutz J."/>
            <person name="Larimer F."/>
            <person name="Land M."/>
            <person name="Hauser L."/>
            <person name="Kyrpides N."/>
            <person name="Mikhailova N."/>
            <person name="Nelson K."/>
            <person name="Gogarten J.P."/>
            <person name="Noll K."/>
            <person name="Richardson P."/>
        </authorList>
    </citation>
    <scope>NUCLEOTIDE SEQUENCE [LARGE SCALE GENOMIC DNA]</scope>
    <source>
        <strain>ATCC BAA-301 / DSM 14385 / NBRC 107922 / TMO</strain>
    </source>
</reference>
<evidence type="ECO:0000255" key="1">
    <source>
        <dbReference type="HAMAP-Rule" id="MF_01043"/>
    </source>
</evidence>
<proteinExistence type="inferred from homology"/>
<gene>
    <name evidence="1" type="primary">plsY</name>
    <name type="ordered locus">Tlet_1653</name>
</gene>
<protein>
    <recommendedName>
        <fullName evidence="1">Glycerol-3-phosphate acyltransferase</fullName>
    </recommendedName>
    <alternativeName>
        <fullName evidence="1">Acyl-PO4 G3P acyltransferase</fullName>
    </alternativeName>
    <alternativeName>
        <fullName evidence="1">Acyl-phosphate--glycerol-3-phosphate acyltransferase</fullName>
    </alternativeName>
    <alternativeName>
        <fullName evidence="1">G3P acyltransferase</fullName>
        <shortName evidence="1">GPAT</shortName>
        <ecNumber evidence="1">2.3.1.275</ecNumber>
    </alternativeName>
    <alternativeName>
        <fullName evidence="1">Lysophosphatidic acid synthase</fullName>
        <shortName evidence="1">LPA synthase</shortName>
    </alternativeName>
</protein>
<keyword id="KW-0997">Cell inner membrane</keyword>
<keyword id="KW-1003">Cell membrane</keyword>
<keyword id="KW-0444">Lipid biosynthesis</keyword>
<keyword id="KW-0443">Lipid metabolism</keyword>
<keyword id="KW-0472">Membrane</keyword>
<keyword id="KW-0594">Phospholipid biosynthesis</keyword>
<keyword id="KW-1208">Phospholipid metabolism</keyword>
<keyword id="KW-1185">Reference proteome</keyword>
<keyword id="KW-0808">Transferase</keyword>
<keyword id="KW-0812">Transmembrane</keyword>
<keyword id="KW-1133">Transmembrane helix</keyword>
<accession>A8F7S3</accession>
<sequence>MNYILIGLISYFCGAIPFSYLLPKLRKIDIRRTGSGNVGGTNALRAAGPVIGFICMVLDGVKAFVPVLVFSLIFKDIHYTGISSIFAVLGHDFPVFLRFKGGKGVASTTGVFFALCPICGFTFLATWISITLLTKYVSLASIVGMYAASFVAFFFNKDYGVLFLLLSTLSTLRHSENIERLVNKSERKTDLIKIIKKRG</sequence>
<comment type="function">
    <text evidence="1">Catalyzes the transfer of an acyl group from acyl-phosphate (acyl-PO(4)) to glycerol-3-phosphate (G3P) to form lysophosphatidic acid (LPA). This enzyme utilizes acyl-phosphate as fatty acyl donor, but not acyl-CoA or acyl-ACP.</text>
</comment>
<comment type="catalytic activity">
    <reaction evidence="1">
        <text>an acyl phosphate + sn-glycerol 3-phosphate = a 1-acyl-sn-glycero-3-phosphate + phosphate</text>
        <dbReference type="Rhea" id="RHEA:34075"/>
        <dbReference type="ChEBI" id="CHEBI:43474"/>
        <dbReference type="ChEBI" id="CHEBI:57597"/>
        <dbReference type="ChEBI" id="CHEBI:57970"/>
        <dbReference type="ChEBI" id="CHEBI:59918"/>
        <dbReference type="EC" id="2.3.1.275"/>
    </reaction>
</comment>
<comment type="pathway">
    <text evidence="1">Lipid metabolism; phospholipid metabolism.</text>
</comment>
<comment type="subunit">
    <text evidence="1">Probably interacts with PlsX.</text>
</comment>
<comment type="subcellular location">
    <subcellularLocation>
        <location evidence="1">Cell inner membrane</location>
        <topology evidence="1">Multi-pass membrane protein</topology>
    </subcellularLocation>
</comment>
<comment type="similarity">
    <text evidence="1">Belongs to the PlsY family.</text>
</comment>
<organism>
    <name type="scientific">Pseudothermotoga lettingae (strain ATCC BAA-301 / DSM 14385 / NBRC 107922 / TMO)</name>
    <name type="common">Thermotoga lettingae</name>
    <dbReference type="NCBI Taxonomy" id="416591"/>
    <lineage>
        <taxon>Bacteria</taxon>
        <taxon>Thermotogati</taxon>
        <taxon>Thermotogota</taxon>
        <taxon>Thermotogae</taxon>
        <taxon>Thermotogales</taxon>
        <taxon>Thermotogaceae</taxon>
        <taxon>Pseudothermotoga</taxon>
    </lineage>
</organism>
<dbReference type="EC" id="2.3.1.275" evidence="1"/>
<dbReference type="EMBL" id="CP000812">
    <property type="protein sequence ID" value="ABV34207.1"/>
    <property type="molecule type" value="Genomic_DNA"/>
</dbReference>
<dbReference type="RefSeq" id="WP_012003683.1">
    <property type="nucleotide sequence ID" value="NZ_BSDV01000001.1"/>
</dbReference>
<dbReference type="SMR" id="A8F7S3"/>
<dbReference type="STRING" id="416591.Tlet_1653"/>
<dbReference type="KEGG" id="tle:Tlet_1653"/>
<dbReference type="eggNOG" id="COG0344">
    <property type="taxonomic scope" value="Bacteria"/>
</dbReference>
<dbReference type="HOGENOM" id="CLU_081254_3_0_0"/>
<dbReference type="OrthoDB" id="9777124at2"/>
<dbReference type="UniPathway" id="UPA00085"/>
<dbReference type="Proteomes" id="UP000002016">
    <property type="component" value="Chromosome"/>
</dbReference>
<dbReference type="GO" id="GO:0005886">
    <property type="term" value="C:plasma membrane"/>
    <property type="evidence" value="ECO:0007669"/>
    <property type="project" value="UniProtKB-SubCell"/>
</dbReference>
<dbReference type="GO" id="GO:0043772">
    <property type="term" value="F:acyl-phosphate glycerol-3-phosphate acyltransferase activity"/>
    <property type="evidence" value="ECO:0007669"/>
    <property type="project" value="UniProtKB-UniRule"/>
</dbReference>
<dbReference type="GO" id="GO:0008654">
    <property type="term" value="P:phospholipid biosynthetic process"/>
    <property type="evidence" value="ECO:0007669"/>
    <property type="project" value="UniProtKB-UniRule"/>
</dbReference>
<dbReference type="HAMAP" id="MF_01043">
    <property type="entry name" value="PlsY"/>
    <property type="match status" value="1"/>
</dbReference>
<dbReference type="InterPro" id="IPR003811">
    <property type="entry name" value="G3P_acylTferase_PlsY"/>
</dbReference>
<dbReference type="NCBIfam" id="TIGR00023">
    <property type="entry name" value="glycerol-3-phosphate 1-O-acyltransferase PlsY"/>
    <property type="match status" value="1"/>
</dbReference>
<dbReference type="PANTHER" id="PTHR30309:SF0">
    <property type="entry name" value="GLYCEROL-3-PHOSPHATE ACYLTRANSFERASE-RELATED"/>
    <property type="match status" value="1"/>
</dbReference>
<dbReference type="PANTHER" id="PTHR30309">
    <property type="entry name" value="INNER MEMBRANE PROTEIN YGIH"/>
    <property type="match status" value="1"/>
</dbReference>
<dbReference type="Pfam" id="PF02660">
    <property type="entry name" value="G3P_acyltransf"/>
    <property type="match status" value="1"/>
</dbReference>
<dbReference type="SMART" id="SM01207">
    <property type="entry name" value="G3P_acyltransf"/>
    <property type="match status" value="1"/>
</dbReference>
<name>PLSY_PSELT</name>